<evidence type="ECO:0000250" key="1"/>
<evidence type="ECO:0000256" key="2">
    <source>
        <dbReference type="SAM" id="MobiDB-lite"/>
    </source>
</evidence>
<evidence type="ECO:0000305" key="3"/>
<comment type="function">
    <text evidence="1">Component of the SRB8-11 complex. The SRB8-11 complex is a regulatory module of the Mediator complex which is itself involved in regulation of basal and activated RNA polymerase II-dependent transcription. The SRB8-11 complex may be involved in the transcriptional repression of a subset of genes regulated by Mediator. It may inhibit the association of the Mediator complex with RNA polymerase II to form the holoenzyme complex (By similarity).</text>
</comment>
<comment type="subunit">
    <text evidence="1">Component of the SRB8-11 complex, which itself associates with the Mediator complex.</text>
</comment>
<comment type="subcellular location">
    <subcellularLocation>
        <location evidence="3">Nucleus</location>
    </subcellularLocation>
</comment>
<comment type="similarity">
    <text evidence="3">Belongs to the Mediator complex subunit 13 family.</text>
</comment>
<organism>
    <name type="scientific">Candida albicans (strain SC5314 / ATCC MYA-2876)</name>
    <name type="common">Yeast</name>
    <dbReference type="NCBI Taxonomy" id="237561"/>
    <lineage>
        <taxon>Eukaryota</taxon>
        <taxon>Fungi</taxon>
        <taxon>Dikarya</taxon>
        <taxon>Ascomycota</taxon>
        <taxon>Saccharomycotina</taxon>
        <taxon>Pichiomycetes</taxon>
        <taxon>Debaryomycetaceae</taxon>
        <taxon>Candida/Lodderomyces clade</taxon>
        <taxon>Candida</taxon>
    </lineage>
</organism>
<name>SSN2_CANAL</name>
<sequence length="1665" mass="186571">MVGANASSISTQYYKLAHLGSISYTIYTSSDNNDQALLELELTIRHKWPQILVTYYNKSLYYFVFGHNKVDSETIDLTKEFPQLSTKYTDTVNVDQFPNPHKSTKNDDNLAWASLSFLKATKKMILYNLSLSGAIKLFGNYCVAPTGDSVYSILCIDPILFQNGDLVVSCVEKPFTQLFSSSVAYPRNLAIDTNFVIYLIPSGIRCHLFDPTSLRNNLIEKPQIENGKLLELLKITTGVQCDESTLWVKLIPNLKHLNNQTSAIGKFIHSVENKKFILWPWDLCLLQFGKFEPAIEEEGLLESSELNNPLHLISDFLDFRIAHNTQLQQQRDSLSDQQQGETVNVPLSAGSVHATGANSFGNVPDISKDVDTVGLSTTTPIETDLFNLQNTEEFFKNDSIHMNLEDQIHKKETEPENESENDMEIDDLFGGDESDDNDDLEEAGNEEEKPTPSNNTIDKNGVIGNALEEAFIADATPSKENINLDSKIMPPDSTSEEAVPDKENFKPKETKPSYIDILKDKMTIEKIVNSPDYKDPGAPLPVVPTPLVSSTVSQSAVTTNPPSVGSAPGPAPGPAPGTETLYEANNAYAQSSQISQLPQQKSAFSPILFNPIIKSDIDTKYGKGGKFYVAKDSSTNGNLDMKNRSLRATSVSGMEIPFSSEDKKRLQQNLEVLDSSTTSDNEGGEDIEDDDNDYEDEGDDDEEEEGEEEEEEESDEDEISDIGKSTPLKLNTQNESVPPQQSNYNPVNITDSGSNTTNNITDKQGYENTEGFGTPFPNQISKYSIKPESPFASNELQSSVSPMYFDTSQSHQSPQLQPSTGTLEVLKASSLESPSKISESSNYLPLILRSINVSTIPSSYLMNNLISSKLLPSFTISDDDLENDLDITKSNEMIVKLGFLKEFLDFMSPNIIFDLGLMKNDESDYYINGVNDLLLNSDPGISSDWILNSLSKVFPCTYPMKLIELLYDFKSLELEDQLDSQLNFLNEIADEEDFVGPKALYRKLKALEWDSFSLNESNKTSFEKYKNVMEKLSAENTVSDDDYFKLPMVKTRILKNGNIVNLNNIGLKFWKYLNFSPVKKQKDFQILLIAETHRNTASYATEFLDQIIQNYKECNFGTISKVNLSTVETRSDLEPISDGLVLVHKEHDQSYNDFYIQTNKKLISLVELIKLDLINKTNNFEFGKPLLLFFIDFNDSSNSNVQVCKIFRNFKVALTTHQLPLVDIFTKIVPSSLLVKKVHHETALKVFSNYKLTKISMNLYNECPNDLANKSIVKNLFTTIVKDPPSKIQFKFMNSSYRDNSSNDDIFLHLAYERSIDNSWFVASWSDPLGRVVHVKSWYCSDSVSKSEKSTYRGDIMDIMSITDDIWSISTDLFKVLNDELGSFGGKKFLVLTRINSIIPDVELVHWKRLSSKHKEISLIVVSVRQTPRIVGSNESEDLGPKSNDYAPTPMIQDKDIFFGFKQTFSTSNTSSPSASGGALVTSPNSLSLHSPQQFLNAPANFLSPQDLIAPTSSGISGAKPGSSGIDPEVVLENQDNEVYGVIPKVPLPSFNSPTRFCMKTGYLMMQVNQPSEEEYKDDIKKTYLVYEINLLSCSNYWNLDVLMKLIMSQYKQMIALNDILCMNPIVGESDILGTHSRNNAIVPWHINAVGKLLDYLVHIYVDKD</sequence>
<reference key="1">
    <citation type="journal article" date="2004" name="Proc. Natl. Acad. Sci. U.S.A.">
        <title>The diploid genome sequence of Candida albicans.</title>
        <authorList>
            <person name="Jones T."/>
            <person name="Federspiel N.A."/>
            <person name="Chibana H."/>
            <person name="Dungan J."/>
            <person name="Kalman S."/>
            <person name="Magee B.B."/>
            <person name="Newport G."/>
            <person name="Thorstenson Y.R."/>
            <person name="Agabian N."/>
            <person name="Magee P.T."/>
            <person name="Davis R.W."/>
            <person name="Scherer S."/>
        </authorList>
    </citation>
    <scope>NUCLEOTIDE SEQUENCE [LARGE SCALE GENOMIC DNA]</scope>
    <source>
        <strain>SC5314 / ATCC MYA-2876</strain>
    </source>
</reference>
<reference key="2">
    <citation type="journal article" date="2007" name="Genome Biol.">
        <title>Assembly of the Candida albicans genome into sixteen supercontigs aligned on the eight chromosomes.</title>
        <authorList>
            <person name="van het Hoog M."/>
            <person name="Rast T.J."/>
            <person name="Martchenko M."/>
            <person name="Grindle S."/>
            <person name="Dignard D."/>
            <person name="Hogues H."/>
            <person name="Cuomo C."/>
            <person name="Berriman M."/>
            <person name="Scherer S."/>
            <person name="Magee B.B."/>
            <person name="Whiteway M."/>
            <person name="Chibana H."/>
            <person name="Nantel A."/>
            <person name="Magee P.T."/>
        </authorList>
    </citation>
    <scope>GENOME REANNOTATION</scope>
    <source>
        <strain>SC5314 / ATCC MYA-2876</strain>
    </source>
</reference>
<reference key="3">
    <citation type="journal article" date="2013" name="Genome Biol.">
        <title>Assembly of a phased diploid Candida albicans genome facilitates allele-specific measurements and provides a simple model for repeat and indel structure.</title>
        <authorList>
            <person name="Muzzey D."/>
            <person name="Schwartz K."/>
            <person name="Weissman J.S."/>
            <person name="Sherlock G."/>
        </authorList>
    </citation>
    <scope>NUCLEOTIDE SEQUENCE [LARGE SCALE GENOMIC DNA]</scope>
    <scope>GENOME REANNOTATION</scope>
    <source>
        <strain>SC5314 / ATCC MYA-2876</strain>
    </source>
</reference>
<gene>
    <name type="primary">SSN2</name>
    <name type="synonym">MED13</name>
    <name type="synonym">SRB9</name>
    <name type="ordered locus">CAALFM_C201470WA</name>
    <name type="ORF">CaO19.1451</name>
    <name type="ORF">CaO19.9026</name>
</gene>
<feature type="chain" id="PRO_0000314246" description="Mediator of RNA polymerase II transcription subunit 13">
    <location>
        <begin position="1"/>
        <end position="1665"/>
    </location>
</feature>
<feature type="region of interest" description="Disordered" evidence="2">
    <location>
        <begin position="411"/>
        <end position="460"/>
    </location>
</feature>
<feature type="region of interest" description="Disordered" evidence="2">
    <location>
        <begin position="482"/>
        <end position="512"/>
    </location>
</feature>
<feature type="region of interest" description="Disordered" evidence="2">
    <location>
        <begin position="551"/>
        <end position="580"/>
    </location>
</feature>
<feature type="region of interest" description="Disordered" evidence="2">
    <location>
        <begin position="673"/>
        <end position="781"/>
    </location>
</feature>
<feature type="compositionally biased region" description="Acidic residues" evidence="2">
    <location>
        <begin position="415"/>
        <end position="445"/>
    </location>
</feature>
<feature type="compositionally biased region" description="Basic and acidic residues" evidence="2">
    <location>
        <begin position="499"/>
        <end position="512"/>
    </location>
</feature>
<feature type="compositionally biased region" description="Low complexity" evidence="2">
    <location>
        <begin position="551"/>
        <end position="568"/>
    </location>
</feature>
<feature type="compositionally biased region" description="Acidic residues" evidence="2">
    <location>
        <begin position="682"/>
        <end position="720"/>
    </location>
</feature>
<feature type="compositionally biased region" description="Polar residues" evidence="2">
    <location>
        <begin position="728"/>
        <end position="762"/>
    </location>
</feature>
<proteinExistence type="inferred from homology"/>
<accession>Q5ALX5</accession>
<accession>A0A1D8PGD4</accession>
<keyword id="KW-0010">Activator</keyword>
<keyword id="KW-0539">Nucleus</keyword>
<keyword id="KW-1185">Reference proteome</keyword>
<keyword id="KW-0678">Repressor</keyword>
<keyword id="KW-0804">Transcription</keyword>
<keyword id="KW-0805">Transcription regulation</keyword>
<protein>
    <recommendedName>
        <fullName>Mediator of RNA polymerase II transcription subunit 13</fullName>
    </recommendedName>
    <alternativeName>
        <fullName>Mediator complex subunit 13</fullName>
    </alternativeName>
</protein>
<dbReference type="EMBL" id="CP017624">
    <property type="protein sequence ID" value="AOW27193.1"/>
    <property type="molecule type" value="Genomic_DNA"/>
</dbReference>
<dbReference type="RefSeq" id="XP_722501.1">
    <property type="nucleotide sequence ID" value="XM_717408.2"/>
</dbReference>
<dbReference type="BioGRID" id="1218939">
    <property type="interactions" value="2"/>
</dbReference>
<dbReference type="FunCoup" id="Q5ALX5">
    <property type="interactions" value="137"/>
</dbReference>
<dbReference type="STRING" id="237561.Q5ALX5"/>
<dbReference type="EnsemblFungi" id="C2_01470W_A-T">
    <property type="protein sequence ID" value="C2_01470W_A-T-p1"/>
    <property type="gene ID" value="C2_01470W_A"/>
</dbReference>
<dbReference type="GeneID" id="3635845"/>
<dbReference type="KEGG" id="cal:CAALFM_C201470WA"/>
<dbReference type="CGD" id="CAL0000184111">
    <property type="gene designation" value="SRB9"/>
</dbReference>
<dbReference type="VEuPathDB" id="FungiDB:C2_01470W_A"/>
<dbReference type="eggNOG" id="KOG3600">
    <property type="taxonomic scope" value="Eukaryota"/>
</dbReference>
<dbReference type="HOGENOM" id="CLU_242296_0_0_1"/>
<dbReference type="InParanoid" id="Q5ALX5"/>
<dbReference type="OMA" id="FSRELWC"/>
<dbReference type="OrthoDB" id="103819at2759"/>
<dbReference type="PRO" id="PR:Q5ALX5"/>
<dbReference type="Proteomes" id="UP000000559">
    <property type="component" value="Chromosome 2"/>
</dbReference>
<dbReference type="GO" id="GO:0016592">
    <property type="term" value="C:mediator complex"/>
    <property type="evidence" value="ECO:0000318"/>
    <property type="project" value="GO_Central"/>
</dbReference>
<dbReference type="GO" id="GO:0003713">
    <property type="term" value="F:transcription coactivator activity"/>
    <property type="evidence" value="ECO:0000318"/>
    <property type="project" value="GO_Central"/>
</dbReference>
<dbReference type="GO" id="GO:0030447">
    <property type="term" value="P:filamentous growth"/>
    <property type="evidence" value="ECO:0000315"/>
    <property type="project" value="CGD"/>
</dbReference>
<dbReference type="GO" id="GO:0030448">
    <property type="term" value="P:hyphal growth"/>
    <property type="evidence" value="ECO:0000315"/>
    <property type="project" value="CGD"/>
</dbReference>
<dbReference type="GO" id="GO:1900233">
    <property type="term" value="P:positive regulation of single-species biofilm formation on inanimate substrate"/>
    <property type="evidence" value="ECO:0000315"/>
    <property type="project" value="CGD"/>
</dbReference>
<dbReference type="GO" id="GO:0045944">
    <property type="term" value="P:positive regulation of transcription by RNA polymerase II"/>
    <property type="evidence" value="ECO:0000318"/>
    <property type="project" value="GO_Central"/>
</dbReference>
<dbReference type="GO" id="GO:0044011">
    <property type="term" value="P:single-species biofilm formation on inanimate substrate"/>
    <property type="evidence" value="ECO:0000315"/>
    <property type="project" value="CGD"/>
</dbReference>
<dbReference type="InterPro" id="IPR009401">
    <property type="entry name" value="Med13_C"/>
</dbReference>
<dbReference type="InterPro" id="IPR051139">
    <property type="entry name" value="Mediator_complx_sub13"/>
</dbReference>
<dbReference type="InterPro" id="IPR021643">
    <property type="entry name" value="Mediator_Med13_N"/>
</dbReference>
<dbReference type="InterPro" id="IPR041285">
    <property type="entry name" value="MID_MedPIWI"/>
</dbReference>
<dbReference type="PANTHER" id="PTHR48249">
    <property type="entry name" value="MEDIATOR OF RNA POLYMERASE II TRANSCRIPTION SUBUNIT 13"/>
    <property type="match status" value="1"/>
</dbReference>
<dbReference type="PANTHER" id="PTHR48249:SF3">
    <property type="entry name" value="MEDIATOR OF RNA POLYMERASE II TRANSCRIPTION SUBUNIT 13"/>
    <property type="match status" value="1"/>
</dbReference>
<dbReference type="Pfam" id="PF06333">
    <property type="entry name" value="Med13_C"/>
    <property type="match status" value="1"/>
</dbReference>
<dbReference type="Pfam" id="PF11597">
    <property type="entry name" value="Med13_N"/>
    <property type="match status" value="1"/>
</dbReference>
<dbReference type="Pfam" id="PF18296">
    <property type="entry name" value="MID_MedPIWI"/>
    <property type="match status" value="1"/>
</dbReference>